<name>ODPB_STAAW</name>
<protein>
    <recommendedName>
        <fullName>Pyruvate dehydrogenase E1 component subunit beta</fullName>
        <ecNumber>1.2.4.1</ecNumber>
    </recommendedName>
</protein>
<dbReference type="EC" id="1.2.4.1"/>
<dbReference type="EMBL" id="BA000033">
    <property type="protein sequence ID" value="BAB94842.1"/>
    <property type="molecule type" value="Genomic_DNA"/>
</dbReference>
<dbReference type="RefSeq" id="WP_000068176.1">
    <property type="nucleotide sequence ID" value="NC_003923.1"/>
</dbReference>
<dbReference type="SMR" id="P0A0A2"/>
<dbReference type="KEGG" id="sam:MW0977"/>
<dbReference type="HOGENOM" id="CLU_012907_1_0_9"/>
<dbReference type="GO" id="GO:0004739">
    <property type="term" value="F:pyruvate dehydrogenase (acetyl-transferring) activity"/>
    <property type="evidence" value="ECO:0007669"/>
    <property type="project" value="UniProtKB-EC"/>
</dbReference>
<dbReference type="CDD" id="cd07036">
    <property type="entry name" value="TPP_PYR_E1-PDHc-beta_like"/>
    <property type="match status" value="1"/>
</dbReference>
<dbReference type="FunFam" id="3.40.50.920:FF:000001">
    <property type="entry name" value="Pyruvate dehydrogenase E1 beta subunit"/>
    <property type="match status" value="1"/>
</dbReference>
<dbReference type="FunFam" id="3.40.50.970:FF:000001">
    <property type="entry name" value="Pyruvate dehydrogenase E1 beta subunit"/>
    <property type="match status" value="1"/>
</dbReference>
<dbReference type="Gene3D" id="3.40.50.920">
    <property type="match status" value="1"/>
</dbReference>
<dbReference type="Gene3D" id="3.40.50.970">
    <property type="match status" value="1"/>
</dbReference>
<dbReference type="InterPro" id="IPR029061">
    <property type="entry name" value="THDP-binding"/>
</dbReference>
<dbReference type="InterPro" id="IPR009014">
    <property type="entry name" value="Transketo_C/PFOR_II"/>
</dbReference>
<dbReference type="InterPro" id="IPR005475">
    <property type="entry name" value="Transketolase-like_Pyr-bd"/>
</dbReference>
<dbReference type="InterPro" id="IPR033248">
    <property type="entry name" value="Transketolase_C"/>
</dbReference>
<dbReference type="PANTHER" id="PTHR43257">
    <property type="entry name" value="PYRUVATE DEHYDROGENASE E1 COMPONENT BETA SUBUNIT"/>
    <property type="match status" value="1"/>
</dbReference>
<dbReference type="PANTHER" id="PTHR43257:SF2">
    <property type="entry name" value="PYRUVATE DEHYDROGENASE E1 COMPONENT SUBUNIT BETA"/>
    <property type="match status" value="1"/>
</dbReference>
<dbReference type="Pfam" id="PF02779">
    <property type="entry name" value="Transket_pyr"/>
    <property type="match status" value="1"/>
</dbReference>
<dbReference type="Pfam" id="PF02780">
    <property type="entry name" value="Transketolase_C"/>
    <property type="match status" value="1"/>
</dbReference>
<dbReference type="SMART" id="SM00861">
    <property type="entry name" value="Transket_pyr"/>
    <property type="match status" value="1"/>
</dbReference>
<dbReference type="SUPFAM" id="SSF52518">
    <property type="entry name" value="Thiamin diphosphate-binding fold (THDP-binding)"/>
    <property type="match status" value="1"/>
</dbReference>
<dbReference type="SUPFAM" id="SSF52922">
    <property type="entry name" value="TK C-terminal domain-like"/>
    <property type="match status" value="1"/>
</dbReference>
<proteinExistence type="inferred from homology"/>
<comment type="function">
    <text evidence="1">The pyruvate dehydrogenase complex catalyzes the overall conversion of pyruvate to acetyl-CoA and CO(2). It contains multiple copies of three enzymatic components: pyruvate dehydrogenase (E1), dihydrolipoamide acetyltransferase (E2) and lipoamide dehydrogenase (E3) (By similarity).</text>
</comment>
<comment type="catalytic activity">
    <reaction>
        <text>N(6)-[(R)-lipoyl]-L-lysyl-[protein] + pyruvate + H(+) = N(6)-[(R)-S(8)-acetyldihydrolipoyl]-L-lysyl-[protein] + CO2</text>
        <dbReference type="Rhea" id="RHEA:19189"/>
        <dbReference type="Rhea" id="RHEA-COMP:10474"/>
        <dbReference type="Rhea" id="RHEA-COMP:10478"/>
        <dbReference type="ChEBI" id="CHEBI:15361"/>
        <dbReference type="ChEBI" id="CHEBI:15378"/>
        <dbReference type="ChEBI" id="CHEBI:16526"/>
        <dbReference type="ChEBI" id="CHEBI:83099"/>
        <dbReference type="ChEBI" id="CHEBI:83111"/>
        <dbReference type="EC" id="1.2.4.1"/>
    </reaction>
</comment>
<comment type="cofactor">
    <cofactor evidence="1">
        <name>thiamine diphosphate</name>
        <dbReference type="ChEBI" id="CHEBI:58937"/>
    </cofactor>
</comment>
<comment type="subunit">
    <text>Heterodimer of an alpha and a beta chain.</text>
</comment>
<keyword id="KW-0560">Oxidoreductase</keyword>
<keyword id="KW-0670">Pyruvate</keyword>
<keyword id="KW-0786">Thiamine pyrophosphate</keyword>
<accession>P0A0A2</accession>
<accession>Q9L6H5</accession>
<gene>
    <name type="primary">pdhB</name>
    <name type="ordered locus">MW0977</name>
</gene>
<evidence type="ECO:0000250" key="1"/>
<sequence>MAQMTMVQAINDALKTELKNDQDVLIFGEDVGVNGGVFRVTEGLQKEFGEDRVFDTPLAESGIGGLAMGLAVEGFRPVMEVQFLGFVFEVFDAIAGQIARTRFRSGGTKTAPVTIRSPFGGGVHTPELHADNLEGILAQSPGLKVVIPSGPYDAKGLLISSIRSNDPVVYLEHMKLYRSFREEVPEEEYTIDIGKANVKKEGNDISIITYGAMVQESMKAAEELEKDGYSVEVIDLRTVQPIDVDTIVASVEKTGRAVVVQEAQRQAGVGAAVVAELSERAILSLEAPIGRVAAADTIYPFTQAENVWLPNKNDIIEKAKETLEF</sequence>
<organism>
    <name type="scientific">Staphylococcus aureus (strain MW2)</name>
    <dbReference type="NCBI Taxonomy" id="196620"/>
    <lineage>
        <taxon>Bacteria</taxon>
        <taxon>Bacillati</taxon>
        <taxon>Bacillota</taxon>
        <taxon>Bacilli</taxon>
        <taxon>Bacillales</taxon>
        <taxon>Staphylococcaceae</taxon>
        <taxon>Staphylococcus</taxon>
    </lineage>
</organism>
<reference key="1">
    <citation type="journal article" date="2002" name="Lancet">
        <title>Genome and virulence determinants of high virulence community-acquired MRSA.</title>
        <authorList>
            <person name="Baba T."/>
            <person name="Takeuchi F."/>
            <person name="Kuroda M."/>
            <person name="Yuzawa H."/>
            <person name="Aoki K."/>
            <person name="Oguchi A."/>
            <person name="Nagai Y."/>
            <person name="Iwama N."/>
            <person name="Asano K."/>
            <person name="Naimi T."/>
            <person name="Kuroda H."/>
            <person name="Cui L."/>
            <person name="Yamamoto K."/>
            <person name="Hiramatsu K."/>
        </authorList>
    </citation>
    <scope>NUCLEOTIDE SEQUENCE [LARGE SCALE GENOMIC DNA]</scope>
    <source>
        <strain>MW2</strain>
    </source>
</reference>
<feature type="chain" id="PRO_0000162233" description="Pyruvate dehydrogenase E1 component subunit beta">
    <location>
        <begin position="1"/>
        <end position="325"/>
    </location>
</feature>
<feature type="binding site" evidence="1">
    <location>
        <position position="60"/>
    </location>
    <ligand>
        <name>thiamine diphosphate</name>
        <dbReference type="ChEBI" id="CHEBI:58937"/>
    </ligand>
</feature>